<keyword id="KW-0963">Cytoplasm</keyword>
<keyword id="KW-0221">Differentiation</keyword>
<keyword id="KW-0225">Disease variant</keyword>
<keyword id="KW-0880">Kelch repeat</keyword>
<keyword id="KW-0597">Phosphoprotein</keyword>
<keyword id="KW-1267">Proteomics identification</keyword>
<keyword id="KW-1185">Reference proteome</keyword>
<keyword id="KW-0677">Repeat</keyword>
<keyword id="KW-0744">Spermatogenesis</keyword>
<keyword id="KW-0833">Ubl conjugation pathway</keyword>
<accession>Q6JEL2</accession>
<accession>Q6NW28</accession>
<accession>Q96MC0</accession>
<reference key="1">
    <citation type="journal article" date="2004" name="Proc. Natl. Acad. Sci. U.S.A.">
        <title>Haploinsufficiency of kelch-like protein homolog 10 causes infertility in male mice.</title>
        <authorList>
            <person name="Yan W."/>
            <person name="Ma L."/>
            <person name="Burns K.H."/>
            <person name="Matzuk M.M."/>
        </authorList>
    </citation>
    <scope>NUCLEOTIDE SEQUENCE [MRNA]</scope>
    <source>
        <tissue>Testis</tissue>
    </source>
</reference>
<reference key="2">
    <citation type="journal article" date="2004" name="Nat. Genet.">
        <title>Complete sequencing and characterization of 21,243 full-length human cDNAs.</title>
        <authorList>
            <person name="Ota T."/>
            <person name="Suzuki Y."/>
            <person name="Nishikawa T."/>
            <person name="Otsuki T."/>
            <person name="Sugiyama T."/>
            <person name="Irie R."/>
            <person name="Wakamatsu A."/>
            <person name="Hayashi K."/>
            <person name="Sato H."/>
            <person name="Nagai K."/>
            <person name="Kimura K."/>
            <person name="Makita H."/>
            <person name="Sekine M."/>
            <person name="Obayashi M."/>
            <person name="Nishi T."/>
            <person name="Shibahara T."/>
            <person name="Tanaka T."/>
            <person name="Ishii S."/>
            <person name="Yamamoto J."/>
            <person name="Saito K."/>
            <person name="Kawai Y."/>
            <person name="Isono Y."/>
            <person name="Nakamura Y."/>
            <person name="Nagahari K."/>
            <person name="Murakami K."/>
            <person name="Yasuda T."/>
            <person name="Iwayanagi T."/>
            <person name="Wagatsuma M."/>
            <person name="Shiratori A."/>
            <person name="Sudo H."/>
            <person name="Hosoiri T."/>
            <person name="Kaku Y."/>
            <person name="Kodaira H."/>
            <person name="Kondo H."/>
            <person name="Sugawara M."/>
            <person name="Takahashi M."/>
            <person name="Kanda K."/>
            <person name="Yokoi T."/>
            <person name="Furuya T."/>
            <person name="Kikkawa E."/>
            <person name="Omura Y."/>
            <person name="Abe K."/>
            <person name="Kamihara K."/>
            <person name="Katsuta N."/>
            <person name="Sato K."/>
            <person name="Tanikawa M."/>
            <person name="Yamazaki M."/>
            <person name="Ninomiya K."/>
            <person name="Ishibashi T."/>
            <person name="Yamashita H."/>
            <person name="Murakawa K."/>
            <person name="Fujimori K."/>
            <person name="Tanai H."/>
            <person name="Kimata M."/>
            <person name="Watanabe M."/>
            <person name="Hiraoka S."/>
            <person name="Chiba Y."/>
            <person name="Ishida S."/>
            <person name="Ono Y."/>
            <person name="Takiguchi S."/>
            <person name="Watanabe S."/>
            <person name="Yosida M."/>
            <person name="Hotuta T."/>
            <person name="Kusano J."/>
            <person name="Kanehori K."/>
            <person name="Takahashi-Fujii A."/>
            <person name="Hara H."/>
            <person name="Tanase T.-O."/>
            <person name="Nomura Y."/>
            <person name="Togiya S."/>
            <person name="Komai F."/>
            <person name="Hara R."/>
            <person name="Takeuchi K."/>
            <person name="Arita M."/>
            <person name="Imose N."/>
            <person name="Musashino K."/>
            <person name="Yuuki H."/>
            <person name="Oshima A."/>
            <person name="Sasaki N."/>
            <person name="Aotsuka S."/>
            <person name="Yoshikawa Y."/>
            <person name="Matsunawa H."/>
            <person name="Ichihara T."/>
            <person name="Shiohata N."/>
            <person name="Sano S."/>
            <person name="Moriya S."/>
            <person name="Momiyama H."/>
            <person name="Satoh N."/>
            <person name="Takami S."/>
            <person name="Terashima Y."/>
            <person name="Suzuki O."/>
            <person name="Nakagawa S."/>
            <person name="Senoh A."/>
            <person name="Mizoguchi H."/>
            <person name="Goto Y."/>
            <person name="Shimizu F."/>
            <person name="Wakebe H."/>
            <person name="Hishigaki H."/>
            <person name="Watanabe T."/>
            <person name="Sugiyama A."/>
            <person name="Takemoto M."/>
            <person name="Kawakami B."/>
            <person name="Yamazaki M."/>
            <person name="Watanabe K."/>
            <person name="Kumagai A."/>
            <person name="Itakura S."/>
            <person name="Fukuzumi Y."/>
            <person name="Fujimori Y."/>
            <person name="Komiyama M."/>
            <person name="Tashiro H."/>
            <person name="Tanigami A."/>
            <person name="Fujiwara T."/>
            <person name="Ono T."/>
            <person name="Yamada K."/>
            <person name="Fujii Y."/>
            <person name="Ozaki K."/>
            <person name="Hirao M."/>
            <person name="Ohmori Y."/>
            <person name="Kawabata A."/>
            <person name="Hikiji T."/>
            <person name="Kobatake N."/>
            <person name="Inagaki H."/>
            <person name="Ikema Y."/>
            <person name="Okamoto S."/>
            <person name="Okitani R."/>
            <person name="Kawakami T."/>
            <person name="Noguchi S."/>
            <person name="Itoh T."/>
            <person name="Shigeta K."/>
            <person name="Senba T."/>
            <person name="Matsumura K."/>
            <person name="Nakajima Y."/>
            <person name="Mizuno T."/>
            <person name="Morinaga M."/>
            <person name="Sasaki M."/>
            <person name="Togashi T."/>
            <person name="Oyama M."/>
            <person name="Hata H."/>
            <person name="Watanabe M."/>
            <person name="Komatsu T."/>
            <person name="Mizushima-Sugano J."/>
            <person name="Satoh T."/>
            <person name="Shirai Y."/>
            <person name="Takahashi Y."/>
            <person name="Nakagawa K."/>
            <person name="Okumura K."/>
            <person name="Nagase T."/>
            <person name="Nomura N."/>
            <person name="Kikuchi H."/>
            <person name="Masuho Y."/>
            <person name="Yamashita R."/>
            <person name="Nakai K."/>
            <person name="Yada T."/>
            <person name="Nakamura Y."/>
            <person name="Ohara O."/>
            <person name="Isogai T."/>
            <person name="Sugano S."/>
        </authorList>
    </citation>
    <scope>NUCLEOTIDE SEQUENCE [LARGE SCALE MRNA]</scope>
    <source>
        <tissue>Testis</tissue>
    </source>
</reference>
<reference key="3">
    <citation type="journal article" date="2006" name="Hum. Mol. Genet.">
        <title>Non-invasive genetic diagnosis of male infertility using spermatozoal RNA: KLHL10 mutations in oligozoospermic patients impair homodimerization.</title>
        <authorList>
            <person name="Yatsenko A.N."/>
            <person name="Roy A."/>
            <person name="Chen R."/>
            <person name="Ma L."/>
            <person name="Murthy L.J."/>
            <person name="Yan W."/>
            <person name="Lamb D.J."/>
            <person name="Matzuk M.M."/>
        </authorList>
    </citation>
    <scope>SELF-ASSOCIATION</scope>
    <scope>VARIANTS SPGF11 PRO-216 AND THR-313</scope>
    <scope>CHARACTERIZATION OF VARIANTS SPGF11 PRO-216 AND THR-313</scope>
</reference>
<dbReference type="EMBL" id="AY495339">
    <property type="protein sequence ID" value="AAS91792.1"/>
    <property type="molecule type" value="mRNA"/>
</dbReference>
<dbReference type="EMBL" id="AK057224">
    <property type="protein sequence ID" value="BAB71387.1"/>
    <property type="status" value="ALT_SEQ"/>
    <property type="molecule type" value="mRNA"/>
</dbReference>
<dbReference type="CCDS" id="CCDS42340.1"/>
<dbReference type="RefSeq" id="NP_001316524.1">
    <property type="nucleotide sequence ID" value="NM_001329595.1"/>
</dbReference>
<dbReference type="RefSeq" id="NP_001316525.1">
    <property type="nucleotide sequence ID" value="NM_001329596.1"/>
</dbReference>
<dbReference type="RefSeq" id="NP_689680.2">
    <property type="nucleotide sequence ID" value="NM_152467.5"/>
</dbReference>
<dbReference type="RefSeq" id="XP_047291853.1">
    <property type="nucleotide sequence ID" value="XM_047435897.1"/>
</dbReference>
<dbReference type="RefSeq" id="XP_054171889.1">
    <property type="nucleotide sequence ID" value="XM_054315914.1"/>
</dbReference>
<dbReference type="RefSeq" id="XP_054171890.1">
    <property type="nucleotide sequence ID" value="XM_054315915.1"/>
</dbReference>
<dbReference type="SMR" id="Q6JEL2"/>
<dbReference type="BioGRID" id="130451">
    <property type="interactions" value="46"/>
</dbReference>
<dbReference type="ComplexPortal" id="CPX-8087">
    <property type="entry name" value="CRL3 E3 ubiquitin ligase complex, KLHL10 variant"/>
</dbReference>
<dbReference type="FunCoup" id="Q6JEL2">
    <property type="interactions" value="30"/>
</dbReference>
<dbReference type="IntAct" id="Q6JEL2">
    <property type="interactions" value="45"/>
</dbReference>
<dbReference type="STRING" id="9606.ENSP00000293303"/>
<dbReference type="iPTMnet" id="Q6JEL2"/>
<dbReference type="PhosphoSitePlus" id="Q6JEL2"/>
<dbReference type="BioMuta" id="KLHL10"/>
<dbReference type="DMDM" id="52783044"/>
<dbReference type="MassIVE" id="Q6JEL2"/>
<dbReference type="PaxDb" id="9606-ENSP00000293303"/>
<dbReference type="PeptideAtlas" id="Q6JEL2"/>
<dbReference type="ProteomicsDB" id="66513"/>
<dbReference type="Antibodypedia" id="29004">
    <property type="antibodies" value="48 antibodies from 11 providers"/>
</dbReference>
<dbReference type="DNASU" id="317719"/>
<dbReference type="Ensembl" id="ENST00000293303.5">
    <property type="protein sequence ID" value="ENSP00000293303.4"/>
    <property type="gene ID" value="ENSG00000161594.7"/>
</dbReference>
<dbReference type="GeneID" id="317719"/>
<dbReference type="KEGG" id="hsa:317719"/>
<dbReference type="MANE-Select" id="ENST00000293303.5">
    <property type="protein sequence ID" value="ENSP00000293303.4"/>
    <property type="RefSeq nucleotide sequence ID" value="NM_152467.5"/>
    <property type="RefSeq protein sequence ID" value="NP_689680.2"/>
</dbReference>
<dbReference type="UCSC" id="uc010cxr.4">
    <property type="organism name" value="human"/>
</dbReference>
<dbReference type="AGR" id="HGNC:18829"/>
<dbReference type="CTD" id="317719"/>
<dbReference type="DisGeNET" id="317719"/>
<dbReference type="GeneCards" id="KLHL10"/>
<dbReference type="HGNC" id="HGNC:18829">
    <property type="gene designation" value="KLHL10"/>
</dbReference>
<dbReference type="HPA" id="ENSG00000161594">
    <property type="expression patterns" value="Tissue enriched (testis)"/>
</dbReference>
<dbReference type="MalaCards" id="KLHL10"/>
<dbReference type="MIM" id="608778">
    <property type="type" value="gene"/>
</dbReference>
<dbReference type="MIM" id="615081">
    <property type="type" value="phenotype"/>
</dbReference>
<dbReference type="neXtProt" id="NX_Q6JEL2"/>
<dbReference type="OpenTargets" id="ENSG00000161594"/>
<dbReference type="Orphanet" id="399805">
    <property type="disease" value="Male infertility with azoospermia or oligozoospermia due to single gene mutation"/>
</dbReference>
<dbReference type="PharmGKB" id="PA134969977"/>
<dbReference type="VEuPathDB" id="HostDB:ENSG00000161594"/>
<dbReference type="eggNOG" id="KOG4441">
    <property type="taxonomic scope" value="Eukaryota"/>
</dbReference>
<dbReference type="GeneTree" id="ENSGT00940000154664"/>
<dbReference type="HOGENOM" id="CLU_004253_14_1_1"/>
<dbReference type="InParanoid" id="Q6JEL2"/>
<dbReference type="OMA" id="YKTNQWS"/>
<dbReference type="OrthoDB" id="191037at2759"/>
<dbReference type="PAN-GO" id="Q6JEL2">
    <property type="GO annotations" value="0 GO annotations based on evolutionary models"/>
</dbReference>
<dbReference type="PhylomeDB" id="Q6JEL2"/>
<dbReference type="TreeFam" id="TF329218"/>
<dbReference type="PathwayCommons" id="Q6JEL2"/>
<dbReference type="SignaLink" id="Q6JEL2"/>
<dbReference type="UniPathway" id="UPA00143"/>
<dbReference type="BioGRID-ORCS" id="317719">
    <property type="hits" value="18 hits in 1181 CRISPR screens"/>
</dbReference>
<dbReference type="ChiTaRS" id="KLHL10">
    <property type="organism name" value="human"/>
</dbReference>
<dbReference type="GenomeRNAi" id="317719"/>
<dbReference type="Pharos" id="Q6JEL2">
    <property type="development level" value="Tdark"/>
</dbReference>
<dbReference type="PRO" id="PR:Q6JEL2"/>
<dbReference type="Proteomes" id="UP000005640">
    <property type="component" value="Chromosome 17"/>
</dbReference>
<dbReference type="RNAct" id="Q6JEL2">
    <property type="molecule type" value="protein"/>
</dbReference>
<dbReference type="Bgee" id="ENSG00000161594">
    <property type="expression patterns" value="Expressed in sperm and 93 other cell types or tissues"/>
</dbReference>
<dbReference type="ExpressionAtlas" id="Q6JEL2">
    <property type="expression patterns" value="baseline and differential"/>
</dbReference>
<dbReference type="GO" id="GO:0031463">
    <property type="term" value="C:Cul3-RING ubiquitin ligase complex"/>
    <property type="evidence" value="ECO:0000318"/>
    <property type="project" value="GO_Central"/>
</dbReference>
<dbReference type="GO" id="GO:0005737">
    <property type="term" value="C:cytoplasm"/>
    <property type="evidence" value="ECO:0000318"/>
    <property type="project" value="GO_Central"/>
</dbReference>
<dbReference type="GO" id="GO:1990756">
    <property type="term" value="F:ubiquitin-like ligase-substrate adaptor activity"/>
    <property type="evidence" value="ECO:0000318"/>
    <property type="project" value="GO_Central"/>
</dbReference>
<dbReference type="GO" id="GO:0000902">
    <property type="term" value="P:cell morphogenesis"/>
    <property type="evidence" value="ECO:0007669"/>
    <property type="project" value="Ensembl"/>
</dbReference>
<dbReference type="GO" id="GO:0009566">
    <property type="term" value="P:fertilization"/>
    <property type="evidence" value="ECO:0007669"/>
    <property type="project" value="Ensembl"/>
</dbReference>
<dbReference type="GO" id="GO:0048873">
    <property type="term" value="P:homeostasis of number of cells within a tissue"/>
    <property type="evidence" value="ECO:0007669"/>
    <property type="project" value="Ensembl"/>
</dbReference>
<dbReference type="GO" id="GO:0048808">
    <property type="term" value="P:male genitalia morphogenesis"/>
    <property type="evidence" value="ECO:0007669"/>
    <property type="project" value="Ensembl"/>
</dbReference>
<dbReference type="GO" id="GO:0008584">
    <property type="term" value="P:male gonad development"/>
    <property type="evidence" value="ECO:0007669"/>
    <property type="project" value="Ensembl"/>
</dbReference>
<dbReference type="GO" id="GO:0043161">
    <property type="term" value="P:proteasome-mediated ubiquitin-dependent protein catabolic process"/>
    <property type="evidence" value="ECO:0000318"/>
    <property type="project" value="GO_Central"/>
</dbReference>
<dbReference type="GO" id="GO:0016567">
    <property type="term" value="P:protein ubiquitination"/>
    <property type="evidence" value="ECO:0007669"/>
    <property type="project" value="UniProtKB-UniPathway"/>
</dbReference>
<dbReference type="GO" id="GO:0007286">
    <property type="term" value="P:spermatid development"/>
    <property type="evidence" value="ECO:0007669"/>
    <property type="project" value="Ensembl"/>
</dbReference>
<dbReference type="CDD" id="cd18450">
    <property type="entry name" value="BACK_KLHL10"/>
    <property type="match status" value="1"/>
</dbReference>
<dbReference type="CDD" id="cd18240">
    <property type="entry name" value="BTB_POZ_KLHL10"/>
    <property type="match status" value="1"/>
</dbReference>
<dbReference type="FunFam" id="1.25.40.420:FF:000001">
    <property type="entry name" value="Kelch-like family member 12"/>
    <property type="match status" value="1"/>
</dbReference>
<dbReference type="FunFam" id="3.30.710.10:FF:000101">
    <property type="entry name" value="kelch-like protein 10 isoform X1"/>
    <property type="match status" value="1"/>
</dbReference>
<dbReference type="FunFam" id="2.120.10.80:FF:000041">
    <property type="entry name" value="kelch-like protein 10 isoform X2"/>
    <property type="match status" value="1"/>
</dbReference>
<dbReference type="Gene3D" id="1.25.40.420">
    <property type="match status" value="1"/>
</dbReference>
<dbReference type="Gene3D" id="2.120.10.80">
    <property type="entry name" value="Kelch-type beta propeller"/>
    <property type="match status" value="1"/>
</dbReference>
<dbReference type="Gene3D" id="3.30.710.10">
    <property type="entry name" value="Potassium Channel Kv1.1, Chain A"/>
    <property type="match status" value="1"/>
</dbReference>
<dbReference type="InterPro" id="IPR011705">
    <property type="entry name" value="BACK"/>
</dbReference>
<dbReference type="InterPro" id="IPR017096">
    <property type="entry name" value="BTB-kelch_protein"/>
</dbReference>
<dbReference type="InterPro" id="IPR000210">
    <property type="entry name" value="BTB/POZ_dom"/>
</dbReference>
<dbReference type="InterPro" id="IPR015915">
    <property type="entry name" value="Kelch-typ_b-propeller"/>
</dbReference>
<dbReference type="InterPro" id="IPR006652">
    <property type="entry name" value="Kelch_1"/>
</dbReference>
<dbReference type="InterPro" id="IPR030608">
    <property type="entry name" value="KLHL10_BTB/POZ"/>
</dbReference>
<dbReference type="InterPro" id="IPR011333">
    <property type="entry name" value="SKP1/BTB/POZ_sf"/>
</dbReference>
<dbReference type="PANTHER" id="PTHR24412">
    <property type="entry name" value="KELCH PROTEIN"/>
    <property type="match status" value="1"/>
</dbReference>
<dbReference type="PANTHER" id="PTHR24412:SF172">
    <property type="entry name" value="KELCH-LIKE PROTEIN 10"/>
    <property type="match status" value="1"/>
</dbReference>
<dbReference type="Pfam" id="PF07707">
    <property type="entry name" value="BACK"/>
    <property type="match status" value="1"/>
</dbReference>
<dbReference type="Pfam" id="PF00651">
    <property type="entry name" value="BTB"/>
    <property type="match status" value="1"/>
</dbReference>
<dbReference type="Pfam" id="PF01344">
    <property type="entry name" value="Kelch_1"/>
    <property type="match status" value="6"/>
</dbReference>
<dbReference type="PIRSF" id="PIRSF037037">
    <property type="entry name" value="Kelch-like_protein_gigaxonin"/>
    <property type="match status" value="1"/>
</dbReference>
<dbReference type="PRINTS" id="PR00501">
    <property type="entry name" value="KELCHREPEAT"/>
</dbReference>
<dbReference type="SMART" id="SM00875">
    <property type="entry name" value="BACK"/>
    <property type="match status" value="1"/>
</dbReference>
<dbReference type="SMART" id="SM00225">
    <property type="entry name" value="BTB"/>
    <property type="match status" value="1"/>
</dbReference>
<dbReference type="SMART" id="SM00612">
    <property type="entry name" value="Kelch"/>
    <property type="match status" value="6"/>
</dbReference>
<dbReference type="SUPFAM" id="SSF117281">
    <property type="entry name" value="Kelch motif"/>
    <property type="match status" value="1"/>
</dbReference>
<dbReference type="SUPFAM" id="SSF54695">
    <property type="entry name" value="POZ domain"/>
    <property type="match status" value="1"/>
</dbReference>
<dbReference type="PROSITE" id="PS50097">
    <property type="entry name" value="BTB"/>
    <property type="match status" value="1"/>
</dbReference>
<protein>
    <recommendedName>
        <fullName>Kelch-like protein 10</fullName>
    </recommendedName>
</protein>
<sequence length="608" mass="68942">MEMESAAASTRFHQPHMERKMSAMACEIFNELRLEGKLCDVVIKVNGFEFSAHKNILCSCSSYFRALFTSGWNNTEKKVYNIPGISPDMMKLIIEYAYTRTVPITPDNVEKLLAAADQFNIMGIVRGCCEFLKSELCLDNCIGICKFTDYYYCPELRQKAYMFILHNFEEMVKVSAEFLELSVTELKDIIEKDELNVKQEDAVFEAILKWISHDPQNRKQHISILLPKVRLALMHAEYFMNNVKMNDYVKDSEECKPVIINALKAMYDLNMNGPSNSDFTNPLTRPRLPYAILFAIGGWSGGSPTNAIEAYDARADRWVNVTCEEESPRAYHGAAYLKGYVYIIGGFDSVDYFNSVKRFDPVKKTWHQVAPMHSRRCYVSVTVLGNFIYAMGGFDGYVRLNTAERYEPETNQWTLIAPMHEQRSDASATTLYGKVYICGGFNGNECLFTAEVYNTESNQWTVIAPMRSRRSGIGVIAYGEHVYAVGGFDGANRLRSAEAYSPVANTWRTIPTMFNPRSNFGIEVVDDLLFVVGGFNGFTTTFNVECYDEKTDEWYDAHDMSIYRSALSCCVVPGLANVEEYAARRDNFPGLALRDEVKYSASTSTLPV</sequence>
<evidence type="ECO:0000250" key="1"/>
<evidence type="ECO:0000250" key="2">
    <source>
        <dbReference type="UniProtKB" id="Q6JEL3"/>
    </source>
</evidence>
<evidence type="ECO:0000255" key="3">
    <source>
        <dbReference type="PROSITE-ProRule" id="PRU00037"/>
    </source>
</evidence>
<evidence type="ECO:0000269" key="4">
    <source>
    </source>
</evidence>
<evidence type="ECO:0000305" key="5"/>
<feature type="chain" id="PRO_0000119112" description="Kelch-like protein 10">
    <location>
        <begin position="1"/>
        <end position="608"/>
    </location>
</feature>
<feature type="domain" description="BTB" evidence="3">
    <location>
        <begin position="39"/>
        <end position="106"/>
    </location>
</feature>
<feature type="repeat" description="Kelch 1">
    <location>
        <begin position="292"/>
        <end position="339"/>
    </location>
</feature>
<feature type="repeat" description="Kelch 2">
    <location>
        <begin position="340"/>
        <end position="386"/>
    </location>
</feature>
<feature type="repeat" description="Kelch 3">
    <location>
        <begin position="388"/>
        <end position="433"/>
    </location>
</feature>
<feature type="repeat" description="Kelch 4">
    <location>
        <begin position="434"/>
        <end position="480"/>
    </location>
</feature>
<feature type="repeat" description="Kelch 5">
    <location>
        <begin position="481"/>
        <end position="527"/>
    </location>
</feature>
<feature type="repeat" description="Kelch 6">
    <location>
        <begin position="529"/>
        <end position="574"/>
    </location>
</feature>
<feature type="modified residue" description="Phosphoserine" evidence="2">
    <location>
        <position position="501"/>
    </location>
</feature>
<feature type="sequence variant" id="VAR_069357" description="In SPGF11; results in impaired self-association; dbSNP:rs116420871." evidence="4">
    <original>Q</original>
    <variation>P</variation>
    <location>
        <position position="216"/>
    </location>
</feature>
<feature type="sequence variant" id="VAR_069358" description="In SPGF11; results in impaired self-association; dbSNP:rs370756367." evidence="4">
    <original>A</original>
    <variation>T</variation>
    <location>
        <position position="313"/>
    </location>
</feature>
<feature type="sequence conflict" description="In Ref. 2; BAB71387." evidence="5" ref="2">
    <original>D</original>
    <variation>G</variation>
    <location>
        <position position="559"/>
    </location>
</feature>
<name>KLH10_HUMAN</name>
<comment type="function">
    <text>May be a substrate-specific adapter of a CUL3-based E3 ubiquitin-protein ligase complex which mediates the ubiquitination and subsequent proteasomal degradation of target proteins during spermatogenesis.</text>
</comment>
<comment type="pathway">
    <text>Protein modification; protein ubiquitination.</text>
</comment>
<comment type="subunit">
    <text evidence="1 5">Self-associates (Probable). Interacts with CUL3; indicative for the participation in an E3 ubiquitin ligase complex (By similarity).</text>
</comment>
<comment type="interaction">
    <interactant intactId="EBI-6426253">
        <id>Q6JEL2</id>
    </interactant>
    <interactant intactId="EBI-10194609">
        <id>Q9H4Y5</id>
        <label>GSTO2</label>
    </interactant>
    <organismsDiffer>false</organismsDiffer>
    <experiments>3</experiments>
</comment>
<comment type="subcellular location">
    <subcellularLocation>
        <location evidence="1">Cytoplasm</location>
    </subcellularLocation>
</comment>
<comment type="disease" evidence="4">
    <disease id="DI-03655">
        <name>Spermatogenic failure 11</name>
        <acronym>SPGF11</acronym>
        <description>An infertility disorder caused by spermatogenesis defects. It results in decreased sperm motility, concentration, and multiple sperm structural defects. Oligozoospermia is usually observed in SPGF11 patients. In addition to oligozoospermia, teratozoospermia and moderate asthenozoospermia is observed in some cases.</description>
        <dbReference type="MIM" id="615081"/>
    </disease>
    <text>The disease is caused by variants affecting the gene represented in this entry.</text>
</comment>
<comment type="sequence caution" evidence="5">
    <conflict type="erroneous termination">
        <sequence resource="EMBL-CDS" id="BAB71387"/>
    </conflict>
    <text>Extended C-terminus.</text>
</comment>
<organism>
    <name type="scientific">Homo sapiens</name>
    <name type="common">Human</name>
    <dbReference type="NCBI Taxonomy" id="9606"/>
    <lineage>
        <taxon>Eukaryota</taxon>
        <taxon>Metazoa</taxon>
        <taxon>Chordata</taxon>
        <taxon>Craniata</taxon>
        <taxon>Vertebrata</taxon>
        <taxon>Euteleostomi</taxon>
        <taxon>Mammalia</taxon>
        <taxon>Eutheria</taxon>
        <taxon>Euarchontoglires</taxon>
        <taxon>Primates</taxon>
        <taxon>Haplorrhini</taxon>
        <taxon>Catarrhini</taxon>
        <taxon>Hominidae</taxon>
        <taxon>Homo</taxon>
    </lineage>
</organism>
<proteinExistence type="evidence at protein level"/>
<gene>
    <name type="primary">KLHL10</name>
</gene>